<feature type="chain" id="PRO_1000058459" description="Sulfur carrier protein FdhD">
    <location>
        <begin position="1"/>
        <end position="274"/>
    </location>
</feature>
<feature type="active site" description="Cysteine persulfide intermediate" evidence="1">
    <location>
        <position position="121"/>
    </location>
</feature>
<feature type="binding site" evidence="1">
    <location>
        <begin position="258"/>
        <end position="263"/>
    </location>
    <ligand>
        <name>Mo-bis(molybdopterin guanine dinucleotide)</name>
        <dbReference type="ChEBI" id="CHEBI:60539"/>
    </ligand>
</feature>
<keyword id="KW-0963">Cytoplasm</keyword>
<keyword id="KW-0501">Molybdenum cofactor biosynthesis</keyword>
<organism>
    <name type="scientific">Yersinia pseudotuberculosis serotype O:1b (strain IP 31758)</name>
    <dbReference type="NCBI Taxonomy" id="349747"/>
    <lineage>
        <taxon>Bacteria</taxon>
        <taxon>Pseudomonadati</taxon>
        <taxon>Pseudomonadota</taxon>
        <taxon>Gammaproteobacteria</taxon>
        <taxon>Enterobacterales</taxon>
        <taxon>Yersiniaceae</taxon>
        <taxon>Yersinia</taxon>
    </lineage>
</organism>
<name>FDHD_YERP3</name>
<comment type="function">
    <text evidence="1">Required for formate dehydrogenase (FDH) activity. Acts as a sulfur carrier protein that transfers sulfur from IscS to the molybdenum cofactor prior to its insertion into FDH.</text>
</comment>
<comment type="subcellular location">
    <subcellularLocation>
        <location evidence="1">Cytoplasm</location>
    </subcellularLocation>
</comment>
<comment type="similarity">
    <text evidence="1">Belongs to the FdhD family.</text>
</comment>
<reference key="1">
    <citation type="journal article" date="2007" name="PLoS Genet.">
        <title>The complete genome sequence of Yersinia pseudotuberculosis IP31758, the causative agent of Far East scarlet-like fever.</title>
        <authorList>
            <person name="Eppinger M."/>
            <person name="Rosovitz M.J."/>
            <person name="Fricke W.F."/>
            <person name="Rasko D.A."/>
            <person name="Kokorina G."/>
            <person name="Fayolle C."/>
            <person name="Lindler L.E."/>
            <person name="Carniel E."/>
            <person name="Ravel J."/>
        </authorList>
    </citation>
    <scope>NUCLEOTIDE SEQUENCE [LARGE SCALE GENOMIC DNA]</scope>
    <source>
        <strain>IP 31758</strain>
    </source>
</reference>
<accession>A7FP85</accession>
<proteinExistence type="inferred from homology"/>
<protein>
    <recommendedName>
        <fullName evidence="1">Sulfur carrier protein FdhD</fullName>
    </recommendedName>
</protein>
<gene>
    <name evidence="1" type="primary">fdhD</name>
    <name type="ordered locus">YpsIP31758_4120</name>
</gene>
<dbReference type="EMBL" id="CP000720">
    <property type="protein sequence ID" value="ABS46517.1"/>
    <property type="molecule type" value="Genomic_DNA"/>
</dbReference>
<dbReference type="RefSeq" id="WP_012105965.1">
    <property type="nucleotide sequence ID" value="NC_009708.1"/>
</dbReference>
<dbReference type="SMR" id="A7FP85"/>
<dbReference type="KEGG" id="ypi:YpsIP31758_4120"/>
<dbReference type="HOGENOM" id="CLU_056887_2_0_6"/>
<dbReference type="Proteomes" id="UP000002412">
    <property type="component" value="Chromosome"/>
</dbReference>
<dbReference type="GO" id="GO:0005737">
    <property type="term" value="C:cytoplasm"/>
    <property type="evidence" value="ECO:0007669"/>
    <property type="project" value="UniProtKB-SubCell"/>
</dbReference>
<dbReference type="GO" id="GO:0097163">
    <property type="term" value="F:sulfur carrier activity"/>
    <property type="evidence" value="ECO:0007669"/>
    <property type="project" value="UniProtKB-UniRule"/>
</dbReference>
<dbReference type="GO" id="GO:0016783">
    <property type="term" value="F:sulfurtransferase activity"/>
    <property type="evidence" value="ECO:0007669"/>
    <property type="project" value="InterPro"/>
</dbReference>
<dbReference type="GO" id="GO:0006777">
    <property type="term" value="P:Mo-molybdopterin cofactor biosynthetic process"/>
    <property type="evidence" value="ECO:0007669"/>
    <property type="project" value="UniProtKB-UniRule"/>
</dbReference>
<dbReference type="Gene3D" id="3.10.20.10">
    <property type="match status" value="1"/>
</dbReference>
<dbReference type="Gene3D" id="3.40.140.10">
    <property type="entry name" value="Cytidine Deaminase, domain 2"/>
    <property type="match status" value="1"/>
</dbReference>
<dbReference type="HAMAP" id="MF_00187">
    <property type="entry name" value="FdhD"/>
    <property type="match status" value="1"/>
</dbReference>
<dbReference type="InterPro" id="IPR016193">
    <property type="entry name" value="Cytidine_deaminase-like"/>
</dbReference>
<dbReference type="InterPro" id="IPR003786">
    <property type="entry name" value="FdhD"/>
</dbReference>
<dbReference type="NCBIfam" id="TIGR00129">
    <property type="entry name" value="fdhD_narQ"/>
    <property type="match status" value="1"/>
</dbReference>
<dbReference type="PANTHER" id="PTHR30592">
    <property type="entry name" value="FORMATE DEHYDROGENASE"/>
    <property type="match status" value="1"/>
</dbReference>
<dbReference type="PANTHER" id="PTHR30592:SF1">
    <property type="entry name" value="SULFUR CARRIER PROTEIN FDHD"/>
    <property type="match status" value="1"/>
</dbReference>
<dbReference type="Pfam" id="PF02634">
    <property type="entry name" value="FdhD-NarQ"/>
    <property type="match status" value="1"/>
</dbReference>
<dbReference type="PIRSF" id="PIRSF015626">
    <property type="entry name" value="FdhD"/>
    <property type="match status" value="1"/>
</dbReference>
<dbReference type="SUPFAM" id="SSF53927">
    <property type="entry name" value="Cytidine deaminase-like"/>
    <property type="match status" value="1"/>
</dbReference>
<sequence>MSQIKPSRLSSSAEIRGARQLDVLQRHKLAEPQQDWLAEEVPVALVYNGISHVVMMATPKDLAAFALGFSLSEGIISSPQEIYAIEITPGCNGIEVNIELSSRRFAGLKERRRAMAGRTGCGVCGIEQLDDIFRPITPLPFTQAFNLEHLDTALAQLKQVQPVGQLTGCTHAAAWINPEGELLGGCEDVGRHVALDKLLGIRAKQPWQQGAVLVSSRASYEMVQKTAMCGAEILFAVSAATTLAVEVAERCNLTLVGFSKPGRATVYTHPQRIK</sequence>
<evidence type="ECO:0000255" key="1">
    <source>
        <dbReference type="HAMAP-Rule" id="MF_00187"/>
    </source>
</evidence>